<sequence>MVLSKENMLKYSAHLRAYNSACGDHPELKSFDSELQQKTSNLINSFTSDAKTGLVPLPQHAAYKEFTKHLAEVNQQVSDYIIGYGEVVWENSTLRSLVETYFESAKKTLDIAENVTEYVDEAKRGERYIVAAVAQFEKDKENDVGKKTKRYENTLRELKKFEAMGNPFDGDKFTTLFKLMHKEQESLLERVRETKEKLDEELKNIEMEISSRKKWSIISNVLFIGAFVAVAVGSMVLVCTGVGAGVGVAGLLSLPLIAIGWVGVHTILENKIQAREKQEEALKKAHRIANEMDKGMETDKVDMNSISGKVHALKSKITSMLNAVKDATEDGANEVDTKQVMETLTGDVVELTEDIKAVGDDVAKYSKMIEETSYHVLQKITGSGK</sequence>
<gene>
    <name type="ordered locus">At3g28290</name>
    <name type="ORF">MZF16.7</name>
</gene>
<reference key="1">
    <citation type="journal article" date="1999" name="Gene">
        <title>Isolation and characterization of a cDNA clone from Arabidopsis thaliana with partial sequence similarity to integrins.</title>
        <authorList>
            <person name="Nagpal P."/>
            <person name="Quatrano R.S."/>
        </authorList>
    </citation>
    <scope>NUCLEOTIDE SEQUENCE [MRNA]</scope>
    <scope>TISSUE SPECIFICITY</scope>
    <scope>SUBCELLULAR LOCATION</scope>
    <source>
        <strain>cv. Columbia</strain>
    </source>
</reference>
<reference key="2">
    <citation type="journal article" date="2000" name="DNA Res.">
        <title>Structural analysis of Arabidopsis thaliana chromosome 3. II. Sequence features of the 4,251,695 bp regions covered by 90 P1, TAC and BAC clones.</title>
        <authorList>
            <person name="Kaneko T."/>
            <person name="Katoh T."/>
            <person name="Sato S."/>
            <person name="Nakamura Y."/>
            <person name="Asamizu E."/>
            <person name="Tabata S."/>
        </authorList>
    </citation>
    <scope>NUCLEOTIDE SEQUENCE [LARGE SCALE GENOMIC DNA]</scope>
    <source>
        <strain>cv. Columbia</strain>
    </source>
</reference>
<reference key="3">
    <citation type="journal article" date="2017" name="Plant J.">
        <title>Araport11: a complete reannotation of the Arabidopsis thaliana reference genome.</title>
        <authorList>
            <person name="Cheng C.Y."/>
            <person name="Krishnakumar V."/>
            <person name="Chan A.P."/>
            <person name="Thibaud-Nissen F."/>
            <person name="Schobel S."/>
            <person name="Town C.D."/>
        </authorList>
    </citation>
    <scope>GENOME REANNOTATION</scope>
    <source>
        <strain>cv. Columbia</strain>
    </source>
</reference>
<reference key="4">
    <citation type="journal article" date="2003" name="Science">
        <title>Empirical analysis of transcriptional activity in the Arabidopsis genome.</title>
        <authorList>
            <person name="Yamada K."/>
            <person name="Lim J."/>
            <person name="Dale J.M."/>
            <person name="Chen H."/>
            <person name="Shinn P."/>
            <person name="Palm C.J."/>
            <person name="Southwick A.M."/>
            <person name="Wu H.C."/>
            <person name="Kim C.J."/>
            <person name="Nguyen M."/>
            <person name="Pham P.K."/>
            <person name="Cheuk R.F."/>
            <person name="Karlin-Newmann G."/>
            <person name="Liu S.X."/>
            <person name="Lam B."/>
            <person name="Sakano H."/>
            <person name="Wu T."/>
            <person name="Yu G."/>
            <person name="Miranda M."/>
            <person name="Quach H.L."/>
            <person name="Tripp M."/>
            <person name="Chang C.H."/>
            <person name="Lee J.M."/>
            <person name="Toriumi M.J."/>
            <person name="Chan M.M."/>
            <person name="Tang C.C."/>
            <person name="Onodera C.S."/>
            <person name="Deng J.M."/>
            <person name="Akiyama K."/>
            <person name="Ansari Y."/>
            <person name="Arakawa T."/>
            <person name="Banh J."/>
            <person name="Banno F."/>
            <person name="Bowser L."/>
            <person name="Brooks S.Y."/>
            <person name="Carninci P."/>
            <person name="Chao Q."/>
            <person name="Choy N."/>
            <person name="Enju A."/>
            <person name="Goldsmith A.D."/>
            <person name="Gurjal M."/>
            <person name="Hansen N.F."/>
            <person name="Hayashizaki Y."/>
            <person name="Johnson-Hopson C."/>
            <person name="Hsuan V.W."/>
            <person name="Iida K."/>
            <person name="Karnes M."/>
            <person name="Khan S."/>
            <person name="Koesema E."/>
            <person name="Ishida J."/>
            <person name="Jiang P.X."/>
            <person name="Jones T."/>
            <person name="Kawai J."/>
            <person name="Kamiya A."/>
            <person name="Meyers C."/>
            <person name="Nakajima M."/>
            <person name="Narusaka M."/>
            <person name="Seki M."/>
            <person name="Sakurai T."/>
            <person name="Satou M."/>
            <person name="Tamse R."/>
            <person name="Vaysberg M."/>
            <person name="Wallender E.K."/>
            <person name="Wong C."/>
            <person name="Yamamura Y."/>
            <person name="Yuan S."/>
            <person name="Shinozaki K."/>
            <person name="Davis R.W."/>
            <person name="Theologis A."/>
            <person name="Ecker J.R."/>
        </authorList>
    </citation>
    <scope>NUCLEOTIDE SEQUENCE [LARGE SCALE MRNA]</scope>
    <source>
        <strain>cv. Columbia</strain>
    </source>
</reference>
<reference key="5">
    <citation type="journal article" date="2002" name="Science">
        <title>Functional annotation of a full-length Arabidopsis cDNA collection.</title>
        <authorList>
            <person name="Seki M."/>
            <person name="Narusaka M."/>
            <person name="Kamiya A."/>
            <person name="Ishida J."/>
            <person name="Satou M."/>
            <person name="Sakurai T."/>
            <person name="Nakajima M."/>
            <person name="Enju A."/>
            <person name="Akiyama K."/>
            <person name="Oono Y."/>
            <person name="Muramatsu M."/>
            <person name="Hayashizaki Y."/>
            <person name="Kawai J."/>
            <person name="Carninci P."/>
            <person name="Itoh M."/>
            <person name="Ishii Y."/>
            <person name="Arakawa T."/>
            <person name="Shibata K."/>
            <person name="Shinagawa A."/>
            <person name="Shinozaki K."/>
        </authorList>
    </citation>
    <scope>NUCLEOTIDE SEQUENCE [LARGE SCALE MRNA] OF 19-385</scope>
    <source>
        <strain>cv. Columbia</strain>
    </source>
</reference>
<reference key="6">
    <citation type="submission" date="2005-03" db="EMBL/GenBank/DDBJ databases">
        <title>Large-scale analysis of RIKEN Arabidopsis full-length (RAFL) cDNAs.</title>
        <authorList>
            <person name="Totoki Y."/>
            <person name="Seki M."/>
            <person name="Ishida J."/>
            <person name="Nakajima M."/>
            <person name="Enju A."/>
            <person name="Kamiya A."/>
            <person name="Narusaka M."/>
            <person name="Shin-i T."/>
            <person name="Nakagawa M."/>
            <person name="Sakamoto N."/>
            <person name="Oishi K."/>
            <person name="Kohara Y."/>
            <person name="Kobayashi M."/>
            <person name="Toyoda A."/>
            <person name="Sakaki Y."/>
            <person name="Sakurai T."/>
            <person name="Iida K."/>
            <person name="Akiyama K."/>
            <person name="Satou M."/>
            <person name="Toyoda T."/>
            <person name="Konagaya A."/>
            <person name="Carninci P."/>
            <person name="Kawai J."/>
            <person name="Hayashizaki Y."/>
            <person name="Shinozaki K."/>
        </authorList>
    </citation>
    <scope>NUCLEOTIDE SEQUENCE [LARGE SCALE MRNA] OF 19-385</scope>
    <source>
        <strain>cv. Columbia</strain>
    </source>
</reference>
<proteinExistence type="evidence at transcript level"/>
<feature type="chain" id="PRO_0000306889" description="UPF0496 protein At3g28290">
    <location>
        <begin position="1"/>
        <end position="385"/>
    </location>
</feature>
<feature type="transmembrane region" description="Helical" evidence="1">
    <location>
        <begin position="217"/>
        <end position="237"/>
    </location>
</feature>
<feature type="transmembrane region" description="Helical" evidence="1">
    <location>
        <begin position="242"/>
        <end position="262"/>
    </location>
</feature>
<feature type="coiled-coil region" evidence="1">
    <location>
        <begin position="138"/>
        <end position="214"/>
    </location>
</feature>
<feature type="coiled-coil region" evidence="1">
    <location>
        <begin position="267"/>
        <end position="294"/>
    </location>
</feature>
<dbReference type="EMBL" id="AF126374">
    <property type="protein sequence ID" value="AAD26355.1"/>
    <property type="molecule type" value="mRNA"/>
</dbReference>
<dbReference type="EMBL" id="AP002051">
    <property type="protein sequence ID" value="BAB02619.1"/>
    <property type="molecule type" value="Genomic_DNA"/>
</dbReference>
<dbReference type="EMBL" id="CP002686">
    <property type="protein sequence ID" value="AEE77428.1"/>
    <property type="molecule type" value="Genomic_DNA"/>
</dbReference>
<dbReference type="EMBL" id="AY057599">
    <property type="protein sequence ID" value="AAL14394.1"/>
    <property type="molecule type" value="mRNA"/>
</dbReference>
<dbReference type="EMBL" id="AY124839">
    <property type="protein sequence ID" value="AAM70548.1"/>
    <property type="molecule type" value="mRNA"/>
</dbReference>
<dbReference type="EMBL" id="AK118201">
    <property type="protein sequence ID" value="BAC42823.1"/>
    <property type="status" value="ALT_INIT"/>
    <property type="molecule type" value="mRNA"/>
</dbReference>
<dbReference type="EMBL" id="AK221728">
    <property type="protein sequence ID" value="BAD93736.1"/>
    <property type="molecule type" value="mRNA"/>
</dbReference>
<dbReference type="SMR" id="P0DI78"/>
<dbReference type="BioGRID" id="7786">
    <property type="interactions" value="2"/>
</dbReference>
<dbReference type="FunCoup" id="P0DI78">
    <property type="interactions" value="2"/>
</dbReference>
<dbReference type="STRING" id="3702.P0DI78"/>
<dbReference type="MetOSite" id="P0DI78"/>
<dbReference type="PaxDb" id="3702-AT3G28290.1"/>
<dbReference type="EnsemblPlants" id="AT3G28290.1">
    <property type="protein sequence ID" value="AT3G28290.1"/>
    <property type="gene ID" value="AT3G28290"/>
</dbReference>
<dbReference type="EnsemblPlants" id="AT3G28300.1">
    <property type="protein sequence ID" value="AT3G28300.1"/>
    <property type="gene ID" value="AT3G28300"/>
</dbReference>
<dbReference type="Gramene" id="AT3G28290.1">
    <property type="protein sequence ID" value="AT3G28290.1"/>
    <property type="gene ID" value="AT3G28290"/>
</dbReference>
<dbReference type="Gramene" id="AT3G28300.1">
    <property type="protein sequence ID" value="AT3G28300.1"/>
    <property type="gene ID" value="AT3G28300"/>
</dbReference>
<dbReference type="KEGG" id="ath:AT3G28290"/>
<dbReference type="KEGG" id="ath:AT3G28300"/>
<dbReference type="Araport" id="AT3G28290"/>
<dbReference type="TAIR" id="AT3G28290">
    <property type="gene designation" value="AT14A"/>
</dbReference>
<dbReference type="eggNOG" id="ENOG502QVAQ">
    <property type="taxonomic scope" value="Eukaryota"/>
</dbReference>
<dbReference type="HOGENOM" id="CLU_044778_1_0_1"/>
<dbReference type="InParanoid" id="P0DI78"/>
<dbReference type="PhylomeDB" id="P0DI78"/>
<dbReference type="PRO" id="PR:P0DI78"/>
<dbReference type="Proteomes" id="UP000006548">
    <property type="component" value="Chromosome 3"/>
</dbReference>
<dbReference type="ExpressionAtlas" id="P0DI78">
    <property type="expression patterns" value="baseline and differential"/>
</dbReference>
<dbReference type="GO" id="GO:0016020">
    <property type="term" value="C:membrane"/>
    <property type="evidence" value="ECO:0007669"/>
    <property type="project" value="UniProtKB-SubCell"/>
</dbReference>
<dbReference type="Gene3D" id="1.20.1170.10">
    <property type="match status" value="1"/>
</dbReference>
<dbReference type="InterPro" id="IPR007749">
    <property type="entry name" value="DUF677"/>
</dbReference>
<dbReference type="PANTHER" id="PTHR31113:SF13">
    <property type="entry name" value="(RAPE) HYPOTHETICAL PROTEIN"/>
    <property type="match status" value="1"/>
</dbReference>
<dbReference type="PANTHER" id="PTHR31113">
    <property type="entry name" value="UPF0496 PROTEIN 3-RELATED"/>
    <property type="match status" value="1"/>
</dbReference>
<dbReference type="Pfam" id="PF05055">
    <property type="entry name" value="DUF677"/>
    <property type="match status" value="1"/>
</dbReference>
<keyword id="KW-0175">Coiled coil</keyword>
<keyword id="KW-0472">Membrane</keyword>
<keyword id="KW-1185">Reference proteome</keyword>
<keyword id="KW-0812">Transmembrane</keyword>
<keyword id="KW-1133">Transmembrane helix</keyword>
<protein>
    <recommendedName>
        <fullName>UPF0496 protein At3g28290</fullName>
    </recommendedName>
    <alternativeName>
        <fullName>Protein At14a</fullName>
    </alternativeName>
</protein>
<accession>P0DI78</accession>
<accession>Q56XE6</accession>
<accession>Q8GXJ7</accession>
<accession>Q9XF11</accession>
<name>U496D_ARATH</name>
<comment type="subcellular location">
    <subcellularLocation>
        <location evidence="2">Membrane</location>
        <topology evidence="2">Multi-pass membrane protein</topology>
    </subcellularLocation>
</comment>
<comment type="tissue specificity">
    <text evidence="2">Widely expressed.</text>
</comment>
<comment type="similarity">
    <text evidence="3">Belongs to the UPF0496 family.</text>
</comment>
<comment type="sequence caution" evidence="3">
    <conflict type="erroneous initiation">
        <sequence resource="EMBL-CDS" id="BAC42823"/>
    </conflict>
    <text>Truncated N-terminus.</text>
</comment>
<organism>
    <name type="scientific">Arabidopsis thaliana</name>
    <name type="common">Mouse-ear cress</name>
    <dbReference type="NCBI Taxonomy" id="3702"/>
    <lineage>
        <taxon>Eukaryota</taxon>
        <taxon>Viridiplantae</taxon>
        <taxon>Streptophyta</taxon>
        <taxon>Embryophyta</taxon>
        <taxon>Tracheophyta</taxon>
        <taxon>Spermatophyta</taxon>
        <taxon>Magnoliopsida</taxon>
        <taxon>eudicotyledons</taxon>
        <taxon>Gunneridae</taxon>
        <taxon>Pentapetalae</taxon>
        <taxon>rosids</taxon>
        <taxon>malvids</taxon>
        <taxon>Brassicales</taxon>
        <taxon>Brassicaceae</taxon>
        <taxon>Camelineae</taxon>
        <taxon>Arabidopsis</taxon>
    </lineage>
</organism>
<evidence type="ECO:0000255" key="1"/>
<evidence type="ECO:0000269" key="2">
    <source>
    </source>
</evidence>
<evidence type="ECO:0000305" key="3"/>